<dbReference type="EMBL" id="CP000768">
    <property type="protein sequence ID" value="ABS44242.1"/>
    <property type="molecule type" value="Genomic_DNA"/>
</dbReference>
<dbReference type="SMR" id="A7H2J3"/>
<dbReference type="KEGG" id="cjd:JJD26997_0548"/>
<dbReference type="HOGENOM" id="CLU_047155_0_1_7"/>
<dbReference type="Proteomes" id="UP000002302">
    <property type="component" value="Chromosome"/>
</dbReference>
<dbReference type="GO" id="GO:0005737">
    <property type="term" value="C:cytoplasm"/>
    <property type="evidence" value="ECO:0007669"/>
    <property type="project" value="UniProtKB-SubCell"/>
</dbReference>
<dbReference type="GO" id="GO:0003746">
    <property type="term" value="F:translation elongation factor activity"/>
    <property type="evidence" value="ECO:0007669"/>
    <property type="project" value="UniProtKB-UniRule"/>
</dbReference>
<dbReference type="CDD" id="cd14275">
    <property type="entry name" value="UBA_EF-Ts"/>
    <property type="match status" value="1"/>
</dbReference>
<dbReference type="FunFam" id="1.10.8.10:FF:000001">
    <property type="entry name" value="Elongation factor Ts"/>
    <property type="match status" value="1"/>
</dbReference>
<dbReference type="Gene3D" id="1.10.286.20">
    <property type="match status" value="1"/>
</dbReference>
<dbReference type="Gene3D" id="1.10.8.10">
    <property type="entry name" value="DNA helicase RuvA subunit, C-terminal domain"/>
    <property type="match status" value="1"/>
</dbReference>
<dbReference type="Gene3D" id="3.30.479.20">
    <property type="entry name" value="Elongation factor Ts, dimerisation domain"/>
    <property type="match status" value="2"/>
</dbReference>
<dbReference type="HAMAP" id="MF_00050">
    <property type="entry name" value="EF_Ts"/>
    <property type="match status" value="1"/>
</dbReference>
<dbReference type="InterPro" id="IPR036402">
    <property type="entry name" value="EF-Ts_dimer_sf"/>
</dbReference>
<dbReference type="InterPro" id="IPR001816">
    <property type="entry name" value="Transl_elong_EFTs/EF1B"/>
</dbReference>
<dbReference type="InterPro" id="IPR014039">
    <property type="entry name" value="Transl_elong_EFTs/EF1B_dimer"/>
</dbReference>
<dbReference type="InterPro" id="IPR018101">
    <property type="entry name" value="Transl_elong_Ts_CS"/>
</dbReference>
<dbReference type="InterPro" id="IPR009060">
    <property type="entry name" value="UBA-like_sf"/>
</dbReference>
<dbReference type="NCBIfam" id="TIGR00116">
    <property type="entry name" value="tsf"/>
    <property type="match status" value="1"/>
</dbReference>
<dbReference type="PANTHER" id="PTHR11741">
    <property type="entry name" value="ELONGATION FACTOR TS"/>
    <property type="match status" value="1"/>
</dbReference>
<dbReference type="PANTHER" id="PTHR11741:SF0">
    <property type="entry name" value="ELONGATION FACTOR TS, MITOCHONDRIAL"/>
    <property type="match status" value="1"/>
</dbReference>
<dbReference type="Pfam" id="PF00889">
    <property type="entry name" value="EF_TS"/>
    <property type="match status" value="2"/>
</dbReference>
<dbReference type="SUPFAM" id="SSF54713">
    <property type="entry name" value="Elongation factor Ts (EF-Ts), dimerisation domain"/>
    <property type="match status" value="3"/>
</dbReference>
<dbReference type="SUPFAM" id="SSF46934">
    <property type="entry name" value="UBA-like"/>
    <property type="match status" value="1"/>
</dbReference>
<dbReference type="PROSITE" id="PS01126">
    <property type="entry name" value="EF_TS_1"/>
    <property type="match status" value="1"/>
</dbReference>
<dbReference type="PROSITE" id="PS01127">
    <property type="entry name" value="EF_TS_2"/>
    <property type="match status" value="1"/>
</dbReference>
<accession>A7H2J3</accession>
<reference key="1">
    <citation type="submission" date="2007-07" db="EMBL/GenBank/DDBJ databases">
        <title>Complete genome sequence of Campylobacter jejuni subsp doylei 269.97 isolated from human blood.</title>
        <authorList>
            <person name="Fouts D.E."/>
            <person name="Mongodin E.F."/>
            <person name="Puiu D."/>
            <person name="Sebastian Y."/>
            <person name="Miller W.G."/>
            <person name="Mandrell R.E."/>
            <person name="Lastovica A.J."/>
            <person name="Nelson K.E."/>
        </authorList>
    </citation>
    <scope>NUCLEOTIDE SEQUENCE [LARGE SCALE GENOMIC DNA]</scope>
    <source>
        <strain>ATCC BAA-1458 / RM4099 / 269.97</strain>
    </source>
</reference>
<evidence type="ECO:0000255" key="1">
    <source>
        <dbReference type="HAMAP-Rule" id="MF_00050"/>
    </source>
</evidence>
<keyword id="KW-0963">Cytoplasm</keyword>
<keyword id="KW-0251">Elongation factor</keyword>
<keyword id="KW-0648">Protein biosynthesis</keyword>
<gene>
    <name evidence="1" type="primary">tsf</name>
    <name type="ordered locus">JJD26997_0548</name>
</gene>
<proteinExistence type="inferred from homology"/>
<feature type="chain" id="PRO_1000006071" description="Elongation factor Ts">
    <location>
        <begin position="1"/>
        <end position="357"/>
    </location>
</feature>
<feature type="region of interest" description="Involved in Mg(2+) ion dislocation from EF-Tu" evidence="1">
    <location>
        <begin position="82"/>
        <end position="85"/>
    </location>
</feature>
<name>EFTS_CAMJD</name>
<sequence>MAEITAAMVKELRESTGAGMMDCKNALSETNGDFDKAVQLLREKGLGKAAKKADRLAAEGLVSVKVSDDFTSATVSEINSETDFVAKNDQFIALTKDTTAHIQNNSLQSVEELHSSTINGVKFEEYLKSQIATIGENLVVRRFATLKAGANGVVNGYIHTNGRVGVVIAAACDSAEVASKSRDLLRQICMHIAAMRPSYLSYEDLDMTFVENEYKALVAELEKENEERRRLKDPNKPEHKIPQFASRKQLSDAILKEAEEKIKEELKTQGKPEKIWDNIIPGKMNSFIADNSQLDSKFTLMGQFYVMDDKKTVEQVIAEKEKEFGGKIKIVEFICFEVGEGLEKKTEDFAAEVAAQL</sequence>
<comment type="function">
    <text evidence="1">Associates with the EF-Tu.GDP complex and induces the exchange of GDP to GTP. It remains bound to the aminoacyl-tRNA.EF-Tu.GTP complex up to the GTP hydrolysis stage on the ribosome.</text>
</comment>
<comment type="subcellular location">
    <subcellularLocation>
        <location evidence="1">Cytoplasm</location>
    </subcellularLocation>
</comment>
<comment type="similarity">
    <text evidence="1">Belongs to the EF-Ts family.</text>
</comment>
<protein>
    <recommendedName>
        <fullName evidence="1">Elongation factor Ts</fullName>
        <shortName evidence="1">EF-Ts</shortName>
    </recommendedName>
</protein>
<organism>
    <name type="scientific">Campylobacter jejuni subsp. doylei (strain ATCC BAA-1458 / RM4099 / 269.97)</name>
    <dbReference type="NCBI Taxonomy" id="360109"/>
    <lineage>
        <taxon>Bacteria</taxon>
        <taxon>Pseudomonadati</taxon>
        <taxon>Campylobacterota</taxon>
        <taxon>Epsilonproteobacteria</taxon>
        <taxon>Campylobacterales</taxon>
        <taxon>Campylobacteraceae</taxon>
        <taxon>Campylobacter</taxon>
    </lineage>
</organism>